<sequence>MDYKNLVAERIKENTELEVDLIEKLIEIPPKKEMGDYAFPCFQLAKTFRKAPNLIAEELKEKINKEGFEKVVTVGPYLNFFVDKTILIKDVLEKVLSEKEKYGSSKVGEGKNVVVEYSSPNIAKPFHIGHLFTTAIGNALYKILSFEGYNCIGINHLGDWGTQFGKLISAYRRWVDEEALEKDAIGELLRIYVKFHGEAEKDPELEKEARLNFKRLEEGSEEETELWNRFKDLSLKEFNKVYDMLGIKFDSLAGESFYSDKMDAVVQEIDDKGLLVDSNGAKVVMLDEYNMPPCMIKKSDGATIYATRDLAAAIYRKKTYDFHKCIYVVGTPQALHFKQVFTTLKLMGHDWADDCKHVGFGLVKLANKKLSTRNGDVVFLEDLLNQSVEETLKIINEKNPNLKNKGDVAKKLGIGAVVFTYLKNNRERDIVFDWKEILSFDGETGPYVEYSYARGKSILRKAGELTGEADYSKLSSKEEFELAKLLGGFNDAIMNAIDKLEPAMVTRYVIEVAKAFNKFYNAHGILNAEDNDVKLARVKLVEATCQVIKNALNLLGIDVVEEM</sequence>
<keyword id="KW-0030">Aminoacyl-tRNA synthetase</keyword>
<keyword id="KW-0067">ATP-binding</keyword>
<keyword id="KW-0963">Cytoplasm</keyword>
<keyword id="KW-0436">Ligase</keyword>
<keyword id="KW-0547">Nucleotide-binding</keyword>
<keyword id="KW-0648">Protein biosynthesis</keyword>
<dbReference type="EC" id="6.1.1.19" evidence="1"/>
<dbReference type="EMBL" id="CP000726">
    <property type="protein sequence ID" value="ABS33634.1"/>
    <property type="molecule type" value="Genomic_DNA"/>
</dbReference>
<dbReference type="RefSeq" id="WP_011948742.1">
    <property type="nucleotide sequence ID" value="NC_009697.1"/>
</dbReference>
<dbReference type="SMR" id="A7FSW7"/>
<dbReference type="GeneID" id="5185327"/>
<dbReference type="KEGG" id="cba:CLB_1112"/>
<dbReference type="HOGENOM" id="CLU_006406_6_1_9"/>
<dbReference type="GO" id="GO:0005737">
    <property type="term" value="C:cytoplasm"/>
    <property type="evidence" value="ECO:0007669"/>
    <property type="project" value="UniProtKB-SubCell"/>
</dbReference>
<dbReference type="GO" id="GO:0004814">
    <property type="term" value="F:arginine-tRNA ligase activity"/>
    <property type="evidence" value="ECO:0007669"/>
    <property type="project" value="UniProtKB-UniRule"/>
</dbReference>
<dbReference type="GO" id="GO:0005524">
    <property type="term" value="F:ATP binding"/>
    <property type="evidence" value="ECO:0007669"/>
    <property type="project" value="UniProtKB-UniRule"/>
</dbReference>
<dbReference type="GO" id="GO:0006420">
    <property type="term" value="P:arginyl-tRNA aminoacylation"/>
    <property type="evidence" value="ECO:0007669"/>
    <property type="project" value="UniProtKB-UniRule"/>
</dbReference>
<dbReference type="CDD" id="cd07956">
    <property type="entry name" value="Anticodon_Ia_Arg"/>
    <property type="match status" value="1"/>
</dbReference>
<dbReference type="CDD" id="cd00671">
    <property type="entry name" value="ArgRS_core"/>
    <property type="match status" value="1"/>
</dbReference>
<dbReference type="FunFam" id="1.10.730.10:FF:000008">
    <property type="entry name" value="Arginine--tRNA ligase"/>
    <property type="match status" value="1"/>
</dbReference>
<dbReference type="FunFam" id="3.30.1360.70:FF:000005">
    <property type="entry name" value="Arginine--tRNA ligase"/>
    <property type="match status" value="1"/>
</dbReference>
<dbReference type="FunFam" id="3.40.50.620:FF:000116">
    <property type="entry name" value="Arginine--tRNA ligase"/>
    <property type="match status" value="1"/>
</dbReference>
<dbReference type="Gene3D" id="3.30.1360.70">
    <property type="entry name" value="Arginyl tRNA synthetase N-terminal domain"/>
    <property type="match status" value="1"/>
</dbReference>
<dbReference type="Gene3D" id="3.40.50.620">
    <property type="entry name" value="HUPs"/>
    <property type="match status" value="1"/>
</dbReference>
<dbReference type="Gene3D" id="1.10.730.10">
    <property type="entry name" value="Isoleucyl-tRNA Synthetase, Domain 1"/>
    <property type="match status" value="1"/>
</dbReference>
<dbReference type="HAMAP" id="MF_00123">
    <property type="entry name" value="Arg_tRNA_synth"/>
    <property type="match status" value="1"/>
</dbReference>
<dbReference type="InterPro" id="IPR001412">
    <property type="entry name" value="aa-tRNA-synth_I_CS"/>
</dbReference>
<dbReference type="InterPro" id="IPR001278">
    <property type="entry name" value="Arg-tRNA-ligase"/>
</dbReference>
<dbReference type="InterPro" id="IPR005148">
    <property type="entry name" value="Arg-tRNA-synth_N"/>
</dbReference>
<dbReference type="InterPro" id="IPR036695">
    <property type="entry name" value="Arg-tRNA-synth_N_sf"/>
</dbReference>
<dbReference type="InterPro" id="IPR035684">
    <property type="entry name" value="ArgRS_core"/>
</dbReference>
<dbReference type="InterPro" id="IPR008909">
    <property type="entry name" value="DALR_anticod-bd"/>
</dbReference>
<dbReference type="InterPro" id="IPR014729">
    <property type="entry name" value="Rossmann-like_a/b/a_fold"/>
</dbReference>
<dbReference type="InterPro" id="IPR009080">
    <property type="entry name" value="tRNAsynth_Ia_anticodon-bd"/>
</dbReference>
<dbReference type="NCBIfam" id="TIGR00456">
    <property type="entry name" value="argS"/>
    <property type="match status" value="1"/>
</dbReference>
<dbReference type="PANTHER" id="PTHR11956:SF5">
    <property type="entry name" value="ARGININE--TRNA LIGASE, CYTOPLASMIC"/>
    <property type="match status" value="1"/>
</dbReference>
<dbReference type="PANTHER" id="PTHR11956">
    <property type="entry name" value="ARGINYL-TRNA SYNTHETASE"/>
    <property type="match status" value="1"/>
</dbReference>
<dbReference type="Pfam" id="PF03485">
    <property type="entry name" value="Arg_tRNA_synt_N"/>
    <property type="match status" value="1"/>
</dbReference>
<dbReference type="Pfam" id="PF05746">
    <property type="entry name" value="DALR_1"/>
    <property type="match status" value="1"/>
</dbReference>
<dbReference type="Pfam" id="PF00750">
    <property type="entry name" value="tRNA-synt_1d"/>
    <property type="match status" value="1"/>
</dbReference>
<dbReference type="PRINTS" id="PR01038">
    <property type="entry name" value="TRNASYNTHARG"/>
</dbReference>
<dbReference type="SMART" id="SM01016">
    <property type="entry name" value="Arg_tRNA_synt_N"/>
    <property type="match status" value="1"/>
</dbReference>
<dbReference type="SMART" id="SM00836">
    <property type="entry name" value="DALR_1"/>
    <property type="match status" value="1"/>
</dbReference>
<dbReference type="SUPFAM" id="SSF47323">
    <property type="entry name" value="Anticodon-binding domain of a subclass of class I aminoacyl-tRNA synthetases"/>
    <property type="match status" value="1"/>
</dbReference>
<dbReference type="SUPFAM" id="SSF55190">
    <property type="entry name" value="Arginyl-tRNA synthetase (ArgRS), N-terminal 'additional' domain"/>
    <property type="match status" value="1"/>
</dbReference>
<dbReference type="SUPFAM" id="SSF52374">
    <property type="entry name" value="Nucleotidylyl transferase"/>
    <property type="match status" value="1"/>
</dbReference>
<dbReference type="PROSITE" id="PS00178">
    <property type="entry name" value="AA_TRNA_LIGASE_I"/>
    <property type="match status" value="1"/>
</dbReference>
<feature type="chain" id="PRO_1000018015" description="Arginine--tRNA ligase">
    <location>
        <begin position="1"/>
        <end position="563"/>
    </location>
</feature>
<feature type="short sequence motif" description="'HIGH' region">
    <location>
        <begin position="120"/>
        <end position="130"/>
    </location>
</feature>
<protein>
    <recommendedName>
        <fullName evidence="1">Arginine--tRNA ligase</fullName>
        <ecNumber evidence="1">6.1.1.19</ecNumber>
    </recommendedName>
    <alternativeName>
        <fullName evidence="1">Arginyl-tRNA synthetase</fullName>
        <shortName evidence="1">ArgRS</shortName>
    </alternativeName>
</protein>
<name>SYR_CLOB1</name>
<comment type="catalytic activity">
    <reaction evidence="1">
        <text>tRNA(Arg) + L-arginine + ATP = L-arginyl-tRNA(Arg) + AMP + diphosphate</text>
        <dbReference type="Rhea" id="RHEA:20301"/>
        <dbReference type="Rhea" id="RHEA-COMP:9658"/>
        <dbReference type="Rhea" id="RHEA-COMP:9673"/>
        <dbReference type="ChEBI" id="CHEBI:30616"/>
        <dbReference type="ChEBI" id="CHEBI:32682"/>
        <dbReference type="ChEBI" id="CHEBI:33019"/>
        <dbReference type="ChEBI" id="CHEBI:78442"/>
        <dbReference type="ChEBI" id="CHEBI:78513"/>
        <dbReference type="ChEBI" id="CHEBI:456215"/>
        <dbReference type="EC" id="6.1.1.19"/>
    </reaction>
</comment>
<comment type="subunit">
    <text evidence="1">Monomer.</text>
</comment>
<comment type="subcellular location">
    <subcellularLocation>
        <location evidence="1">Cytoplasm</location>
    </subcellularLocation>
</comment>
<comment type="similarity">
    <text evidence="1">Belongs to the class-I aminoacyl-tRNA synthetase family.</text>
</comment>
<organism>
    <name type="scientific">Clostridium botulinum (strain ATCC 19397 / Type A)</name>
    <dbReference type="NCBI Taxonomy" id="441770"/>
    <lineage>
        <taxon>Bacteria</taxon>
        <taxon>Bacillati</taxon>
        <taxon>Bacillota</taxon>
        <taxon>Clostridia</taxon>
        <taxon>Eubacteriales</taxon>
        <taxon>Clostridiaceae</taxon>
        <taxon>Clostridium</taxon>
    </lineage>
</organism>
<proteinExistence type="inferred from homology"/>
<accession>A7FSW7</accession>
<reference key="1">
    <citation type="journal article" date="2007" name="PLoS ONE">
        <title>Analysis of the neurotoxin complex genes in Clostridium botulinum A1-A4 and B1 strains: BoNT/A3, /Ba4 and /B1 clusters are located within plasmids.</title>
        <authorList>
            <person name="Smith T.J."/>
            <person name="Hill K.K."/>
            <person name="Foley B.T."/>
            <person name="Detter J.C."/>
            <person name="Munk A.C."/>
            <person name="Bruce D.C."/>
            <person name="Doggett N.A."/>
            <person name="Smith L.A."/>
            <person name="Marks J.D."/>
            <person name="Xie G."/>
            <person name="Brettin T.S."/>
        </authorList>
    </citation>
    <scope>NUCLEOTIDE SEQUENCE [LARGE SCALE GENOMIC DNA]</scope>
    <source>
        <strain>ATCC 19397 / Type A</strain>
    </source>
</reference>
<gene>
    <name evidence="1" type="primary">argS</name>
    <name type="ordered locus">CLB_1112</name>
</gene>
<evidence type="ECO:0000255" key="1">
    <source>
        <dbReference type="HAMAP-Rule" id="MF_00123"/>
    </source>
</evidence>